<sequence>MTLLALGINHKTAPVSLRERVTFSPDTLDQALDSLLAQPMVQGGVVLSTCNRTELYLSVEEQDNLQEALIRWLCDYHNLNEDDLRNSLYWHQDNDAVSHLMRVASGLDSLVLGEPQILGQVKKAFADSQKGHLNASALERMFQKSFSVAKRVRTETDIGASAVSVAFAACTLARQIFESLSTVTVLLVGAGETIELVARHLREHKVQKMIIANRTRERAQALADEVGAEVISLSDIDARLQDADIIISSTASPLPIIGKGMVERALKSRRNQPMLLVDIAVPRDVEPEVGKLANAYLYSVDDLQSIISHNLAQRQAAAVEAETIVEQEASEFMAWLRAQGASETIREYRSQSEQIRDELTTKALSALQQGGDAQAILQDLAWKLTNRLIHAPTKSLQQAARDGDDERLNILRDSLGLE</sequence>
<name>HEM1_SALSV</name>
<reference key="1">
    <citation type="journal article" date="2011" name="J. Bacteriol.">
        <title>Comparative genomics of 28 Salmonella enterica isolates: evidence for CRISPR-mediated adaptive sublineage evolution.</title>
        <authorList>
            <person name="Fricke W.F."/>
            <person name="Mammel M.K."/>
            <person name="McDermott P.F."/>
            <person name="Tartera C."/>
            <person name="White D.G."/>
            <person name="Leclerc J.E."/>
            <person name="Ravel J."/>
            <person name="Cebula T.A."/>
        </authorList>
    </citation>
    <scope>NUCLEOTIDE SEQUENCE [LARGE SCALE GENOMIC DNA]</scope>
    <source>
        <strain>CVM19633</strain>
    </source>
</reference>
<gene>
    <name evidence="1" type="primary">hemA</name>
    <name type="ordered locus">SeSA_A1914</name>
</gene>
<evidence type="ECO:0000255" key="1">
    <source>
        <dbReference type="HAMAP-Rule" id="MF_00087"/>
    </source>
</evidence>
<organism>
    <name type="scientific">Salmonella schwarzengrund (strain CVM19633)</name>
    <dbReference type="NCBI Taxonomy" id="439843"/>
    <lineage>
        <taxon>Bacteria</taxon>
        <taxon>Pseudomonadati</taxon>
        <taxon>Pseudomonadota</taxon>
        <taxon>Gammaproteobacteria</taxon>
        <taxon>Enterobacterales</taxon>
        <taxon>Enterobacteriaceae</taxon>
        <taxon>Salmonella</taxon>
    </lineage>
</organism>
<comment type="function">
    <text evidence="1">Catalyzes the NADPH-dependent reduction of glutamyl-tRNA(Glu) to glutamate 1-semialdehyde (GSA).</text>
</comment>
<comment type="catalytic activity">
    <reaction evidence="1">
        <text>(S)-4-amino-5-oxopentanoate + tRNA(Glu) + NADP(+) = L-glutamyl-tRNA(Glu) + NADPH + H(+)</text>
        <dbReference type="Rhea" id="RHEA:12344"/>
        <dbReference type="Rhea" id="RHEA-COMP:9663"/>
        <dbReference type="Rhea" id="RHEA-COMP:9680"/>
        <dbReference type="ChEBI" id="CHEBI:15378"/>
        <dbReference type="ChEBI" id="CHEBI:57501"/>
        <dbReference type="ChEBI" id="CHEBI:57783"/>
        <dbReference type="ChEBI" id="CHEBI:58349"/>
        <dbReference type="ChEBI" id="CHEBI:78442"/>
        <dbReference type="ChEBI" id="CHEBI:78520"/>
        <dbReference type="EC" id="1.2.1.70"/>
    </reaction>
</comment>
<comment type="pathway">
    <text evidence="1">Porphyrin-containing compound metabolism; protoporphyrin-IX biosynthesis; 5-aminolevulinate from L-glutamyl-tRNA(Glu): step 1/2.</text>
</comment>
<comment type="subunit">
    <text evidence="1">Homodimer.</text>
</comment>
<comment type="domain">
    <text evidence="1">Possesses an unusual extended V-shaped dimeric structure with each monomer consisting of three distinct domains arranged along a curved 'spinal' alpha-helix. The N-terminal catalytic domain specifically recognizes the glutamate moiety of the substrate. The second domain is the NADPH-binding domain, and the third C-terminal domain is responsible for dimerization.</text>
</comment>
<comment type="miscellaneous">
    <text evidence="1">During catalysis, the active site Cys acts as a nucleophile attacking the alpha-carbonyl group of tRNA-bound glutamate with the formation of a thioester intermediate between enzyme and glutamate, and the concomitant release of tRNA(Glu). The thioester intermediate is finally reduced by direct hydride transfer from NADPH, to form the product GSA.</text>
</comment>
<comment type="similarity">
    <text evidence="1">Belongs to the glutamyl-tRNA reductase family.</text>
</comment>
<dbReference type="EC" id="1.2.1.70" evidence="1"/>
<dbReference type="EMBL" id="CP001127">
    <property type="protein sequence ID" value="ACF91755.1"/>
    <property type="molecule type" value="Genomic_DNA"/>
</dbReference>
<dbReference type="RefSeq" id="WP_000173208.1">
    <property type="nucleotide sequence ID" value="NC_011094.1"/>
</dbReference>
<dbReference type="SMR" id="B4TXU3"/>
<dbReference type="KEGG" id="sew:SeSA_A1914"/>
<dbReference type="HOGENOM" id="CLU_035113_2_2_6"/>
<dbReference type="UniPathway" id="UPA00251">
    <property type="reaction ID" value="UER00316"/>
</dbReference>
<dbReference type="Proteomes" id="UP000001865">
    <property type="component" value="Chromosome"/>
</dbReference>
<dbReference type="GO" id="GO:0008883">
    <property type="term" value="F:glutamyl-tRNA reductase activity"/>
    <property type="evidence" value="ECO:0007669"/>
    <property type="project" value="UniProtKB-UniRule"/>
</dbReference>
<dbReference type="GO" id="GO:0050661">
    <property type="term" value="F:NADP binding"/>
    <property type="evidence" value="ECO:0007669"/>
    <property type="project" value="InterPro"/>
</dbReference>
<dbReference type="GO" id="GO:0019353">
    <property type="term" value="P:protoporphyrinogen IX biosynthetic process from glutamate"/>
    <property type="evidence" value="ECO:0007669"/>
    <property type="project" value="TreeGrafter"/>
</dbReference>
<dbReference type="CDD" id="cd05213">
    <property type="entry name" value="NAD_bind_Glutamyl_tRNA_reduct"/>
    <property type="match status" value="1"/>
</dbReference>
<dbReference type="FunFam" id="3.30.460.30:FF:000001">
    <property type="entry name" value="Glutamyl-tRNA reductase"/>
    <property type="match status" value="1"/>
</dbReference>
<dbReference type="FunFam" id="3.40.50.720:FF:000031">
    <property type="entry name" value="Glutamyl-tRNA reductase"/>
    <property type="match status" value="1"/>
</dbReference>
<dbReference type="Gene3D" id="3.30.460.30">
    <property type="entry name" value="Glutamyl-tRNA reductase, N-terminal domain"/>
    <property type="match status" value="1"/>
</dbReference>
<dbReference type="Gene3D" id="3.40.50.720">
    <property type="entry name" value="NAD(P)-binding Rossmann-like Domain"/>
    <property type="match status" value="1"/>
</dbReference>
<dbReference type="HAMAP" id="MF_00087">
    <property type="entry name" value="Glu_tRNA_reductase"/>
    <property type="match status" value="1"/>
</dbReference>
<dbReference type="InterPro" id="IPR000343">
    <property type="entry name" value="4pyrrol_synth_GluRdtase"/>
</dbReference>
<dbReference type="InterPro" id="IPR015896">
    <property type="entry name" value="4pyrrol_synth_GluRdtase_dimer"/>
</dbReference>
<dbReference type="InterPro" id="IPR015895">
    <property type="entry name" value="4pyrrol_synth_GluRdtase_N"/>
</dbReference>
<dbReference type="InterPro" id="IPR018214">
    <property type="entry name" value="GluRdtase_CS"/>
</dbReference>
<dbReference type="InterPro" id="IPR036453">
    <property type="entry name" value="GluRdtase_dimer_dom_sf"/>
</dbReference>
<dbReference type="InterPro" id="IPR036343">
    <property type="entry name" value="GluRdtase_N_sf"/>
</dbReference>
<dbReference type="InterPro" id="IPR036291">
    <property type="entry name" value="NAD(P)-bd_dom_sf"/>
</dbReference>
<dbReference type="InterPro" id="IPR006151">
    <property type="entry name" value="Shikm_DH/Glu-tRNA_Rdtase"/>
</dbReference>
<dbReference type="NCBIfam" id="TIGR01035">
    <property type="entry name" value="hemA"/>
    <property type="match status" value="1"/>
</dbReference>
<dbReference type="PANTHER" id="PTHR43013">
    <property type="entry name" value="GLUTAMYL-TRNA REDUCTASE"/>
    <property type="match status" value="1"/>
</dbReference>
<dbReference type="PANTHER" id="PTHR43013:SF1">
    <property type="entry name" value="GLUTAMYL-TRNA REDUCTASE"/>
    <property type="match status" value="1"/>
</dbReference>
<dbReference type="Pfam" id="PF00745">
    <property type="entry name" value="GlutR_dimer"/>
    <property type="match status" value="1"/>
</dbReference>
<dbReference type="Pfam" id="PF05201">
    <property type="entry name" value="GlutR_N"/>
    <property type="match status" value="1"/>
</dbReference>
<dbReference type="Pfam" id="PF01488">
    <property type="entry name" value="Shikimate_DH"/>
    <property type="match status" value="1"/>
</dbReference>
<dbReference type="PIRSF" id="PIRSF000445">
    <property type="entry name" value="4pyrrol_synth_GluRdtase"/>
    <property type="match status" value="1"/>
</dbReference>
<dbReference type="SUPFAM" id="SSF69742">
    <property type="entry name" value="Glutamyl tRNA-reductase catalytic, N-terminal domain"/>
    <property type="match status" value="1"/>
</dbReference>
<dbReference type="SUPFAM" id="SSF69075">
    <property type="entry name" value="Glutamyl tRNA-reductase dimerization domain"/>
    <property type="match status" value="1"/>
</dbReference>
<dbReference type="SUPFAM" id="SSF51735">
    <property type="entry name" value="NAD(P)-binding Rossmann-fold domains"/>
    <property type="match status" value="1"/>
</dbReference>
<dbReference type="PROSITE" id="PS00747">
    <property type="entry name" value="GLUTR"/>
    <property type="match status" value="1"/>
</dbReference>
<accession>B4TXU3</accession>
<proteinExistence type="inferred from homology"/>
<protein>
    <recommendedName>
        <fullName evidence="1">Glutamyl-tRNA reductase</fullName>
        <shortName evidence="1">GluTR</shortName>
        <ecNumber evidence="1">1.2.1.70</ecNumber>
    </recommendedName>
</protein>
<keyword id="KW-0521">NADP</keyword>
<keyword id="KW-0560">Oxidoreductase</keyword>
<keyword id="KW-0627">Porphyrin biosynthesis</keyword>
<feature type="chain" id="PRO_1000093168" description="Glutamyl-tRNA reductase">
    <location>
        <begin position="1"/>
        <end position="418"/>
    </location>
</feature>
<feature type="active site" description="Nucleophile" evidence="1">
    <location>
        <position position="50"/>
    </location>
</feature>
<feature type="binding site" evidence="1">
    <location>
        <begin position="49"/>
        <end position="52"/>
    </location>
    <ligand>
        <name>substrate</name>
    </ligand>
</feature>
<feature type="binding site" evidence="1">
    <location>
        <position position="109"/>
    </location>
    <ligand>
        <name>substrate</name>
    </ligand>
</feature>
<feature type="binding site" evidence="1">
    <location>
        <begin position="114"/>
        <end position="116"/>
    </location>
    <ligand>
        <name>substrate</name>
    </ligand>
</feature>
<feature type="binding site" evidence="1">
    <location>
        <position position="120"/>
    </location>
    <ligand>
        <name>substrate</name>
    </ligand>
</feature>
<feature type="binding site" evidence="1">
    <location>
        <begin position="189"/>
        <end position="194"/>
    </location>
    <ligand>
        <name>NADP(+)</name>
        <dbReference type="ChEBI" id="CHEBI:58349"/>
    </ligand>
</feature>
<feature type="site" description="Important for activity" evidence="1">
    <location>
        <position position="99"/>
    </location>
</feature>